<proteinExistence type="inferred from homology"/>
<gene>
    <name evidence="1" type="primary">pyrH</name>
    <name type="ordered locus">CPn_0698</name>
    <name type="ordered locus">CP_0048</name>
    <name type="ordered locus">CpB0725</name>
</gene>
<comment type="function">
    <text evidence="1">Catalyzes the reversible phosphorylation of UMP to UDP.</text>
</comment>
<comment type="catalytic activity">
    <reaction evidence="1">
        <text>UMP + ATP = UDP + ADP</text>
        <dbReference type="Rhea" id="RHEA:24400"/>
        <dbReference type="ChEBI" id="CHEBI:30616"/>
        <dbReference type="ChEBI" id="CHEBI:57865"/>
        <dbReference type="ChEBI" id="CHEBI:58223"/>
        <dbReference type="ChEBI" id="CHEBI:456216"/>
        <dbReference type="EC" id="2.7.4.22"/>
    </reaction>
</comment>
<comment type="activity regulation">
    <text evidence="1">Inhibited by UTP.</text>
</comment>
<comment type="pathway">
    <text evidence="1">Pyrimidine metabolism; CTP biosynthesis via de novo pathway; UDP from UMP (UMPK route): step 1/1.</text>
</comment>
<comment type="subunit">
    <text evidence="1">Homohexamer.</text>
</comment>
<comment type="subcellular location">
    <subcellularLocation>
        <location evidence="1">Cytoplasm</location>
    </subcellularLocation>
</comment>
<comment type="similarity">
    <text evidence="1">Belongs to the UMP kinase family.</text>
</comment>
<name>PYRH_CHLPN</name>
<dbReference type="EC" id="2.7.4.22" evidence="1"/>
<dbReference type="EMBL" id="AE001363">
    <property type="protein sequence ID" value="AAD18837.1"/>
    <property type="molecule type" value="Genomic_DNA"/>
</dbReference>
<dbReference type="EMBL" id="AE002161">
    <property type="protein sequence ID" value="AAF37941.1"/>
    <property type="molecule type" value="Genomic_DNA"/>
</dbReference>
<dbReference type="EMBL" id="BA000008">
    <property type="protein sequence ID" value="BAA98905.1"/>
    <property type="molecule type" value="Genomic_DNA"/>
</dbReference>
<dbReference type="EMBL" id="AE009440">
    <property type="protein sequence ID" value="AAP98654.1"/>
    <property type="molecule type" value="Genomic_DNA"/>
</dbReference>
<dbReference type="PIR" id="B72045">
    <property type="entry name" value="B72045"/>
</dbReference>
<dbReference type="PIR" id="G86577">
    <property type="entry name" value="G86577"/>
</dbReference>
<dbReference type="RefSeq" id="NP_224894.1">
    <property type="nucleotide sequence ID" value="NC_000922.1"/>
</dbReference>
<dbReference type="RefSeq" id="WP_010883336.1">
    <property type="nucleotide sequence ID" value="NZ_LN847257.1"/>
</dbReference>
<dbReference type="SMR" id="Q9Z7K7"/>
<dbReference type="STRING" id="406984.CPK_ORF00102"/>
<dbReference type="GeneID" id="45050750"/>
<dbReference type="KEGG" id="cpa:CP_0048"/>
<dbReference type="KEGG" id="cpj:pyrH"/>
<dbReference type="KEGG" id="cpn:CPn_0698"/>
<dbReference type="KEGG" id="cpt:CpB0725"/>
<dbReference type="PATRIC" id="fig|115713.3.peg.772"/>
<dbReference type="eggNOG" id="COG0528">
    <property type="taxonomic scope" value="Bacteria"/>
</dbReference>
<dbReference type="HOGENOM" id="CLU_033861_0_1_0"/>
<dbReference type="OrthoDB" id="9807458at2"/>
<dbReference type="UniPathway" id="UPA00159">
    <property type="reaction ID" value="UER00275"/>
</dbReference>
<dbReference type="Proteomes" id="UP000000583">
    <property type="component" value="Chromosome"/>
</dbReference>
<dbReference type="Proteomes" id="UP000000801">
    <property type="component" value="Chromosome"/>
</dbReference>
<dbReference type="GO" id="GO:0005737">
    <property type="term" value="C:cytoplasm"/>
    <property type="evidence" value="ECO:0007669"/>
    <property type="project" value="UniProtKB-SubCell"/>
</dbReference>
<dbReference type="GO" id="GO:0005524">
    <property type="term" value="F:ATP binding"/>
    <property type="evidence" value="ECO:0007669"/>
    <property type="project" value="UniProtKB-KW"/>
</dbReference>
<dbReference type="GO" id="GO:0033862">
    <property type="term" value="F:UMP kinase activity"/>
    <property type="evidence" value="ECO:0007669"/>
    <property type="project" value="UniProtKB-EC"/>
</dbReference>
<dbReference type="GO" id="GO:0044210">
    <property type="term" value="P:'de novo' CTP biosynthetic process"/>
    <property type="evidence" value="ECO:0007669"/>
    <property type="project" value="UniProtKB-UniRule"/>
</dbReference>
<dbReference type="GO" id="GO:0006225">
    <property type="term" value="P:UDP biosynthetic process"/>
    <property type="evidence" value="ECO:0007669"/>
    <property type="project" value="TreeGrafter"/>
</dbReference>
<dbReference type="CDD" id="cd04254">
    <property type="entry name" value="AAK_UMPK-PyrH-Ec"/>
    <property type="match status" value="1"/>
</dbReference>
<dbReference type="FunFam" id="3.40.1160.10:FF:000001">
    <property type="entry name" value="Uridylate kinase"/>
    <property type="match status" value="1"/>
</dbReference>
<dbReference type="Gene3D" id="3.40.1160.10">
    <property type="entry name" value="Acetylglutamate kinase-like"/>
    <property type="match status" value="1"/>
</dbReference>
<dbReference type="HAMAP" id="MF_01220_B">
    <property type="entry name" value="PyrH_B"/>
    <property type="match status" value="1"/>
</dbReference>
<dbReference type="InterPro" id="IPR036393">
    <property type="entry name" value="AceGlu_kinase-like_sf"/>
</dbReference>
<dbReference type="InterPro" id="IPR001048">
    <property type="entry name" value="Asp/Glu/Uridylate_kinase"/>
</dbReference>
<dbReference type="InterPro" id="IPR011817">
    <property type="entry name" value="Uridylate_kinase"/>
</dbReference>
<dbReference type="InterPro" id="IPR015963">
    <property type="entry name" value="Uridylate_kinase_bac"/>
</dbReference>
<dbReference type="NCBIfam" id="TIGR02075">
    <property type="entry name" value="pyrH_bact"/>
    <property type="match status" value="1"/>
</dbReference>
<dbReference type="PANTHER" id="PTHR42833">
    <property type="entry name" value="URIDYLATE KINASE"/>
    <property type="match status" value="1"/>
</dbReference>
<dbReference type="PANTHER" id="PTHR42833:SF4">
    <property type="entry name" value="URIDYLATE KINASE PUMPKIN, CHLOROPLASTIC"/>
    <property type="match status" value="1"/>
</dbReference>
<dbReference type="Pfam" id="PF00696">
    <property type="entry name" value="AA_kinase"/>
    <property type="match status" value="1"/>
</dbReference>
<dbReference type="PIRSF" id="PIRSF005650">
    <property type="entry name" value="Uridylate_kin"/>
    <property type="match status" value="1"/>
</dbReference>
<dbReference type="SUPFAM" id="SSF53633">
    <property type="entry name" value="Carbamate kinase-like"/>
    <property type="match status" value="1"/>
</dbReference>
<sequence>MAKQTRRVLFKISGEALSKDSSNRIDEMRLSRLVSELRAVRNNDIEIALVIGGGNILRGLAEQKELQINRVSADQMGMLATLINGMAVADALKAEDIPCLLTSTLSCPQLADLYTPQKSIEALDQGKILICTTGAGSPYLTTDTGAALRACELNVDVLIKATMHVDGVYDKDPRLFPDAVKYDFVSYKDFLSNQLGVMDASAISLCMDSHIPIRVFSFLQHSLEKALFDPTIGTLVSEDVNHVCSPRH</sequence>
<organism>
    <name type="scientific">Chlamydia pneumoniae</name>
    <name type="common">Chlamydophila pneumoniae</name>
    <dbReference type="NCBI Taxonomy" id="83558"/>
    <lineage>
        <taxon>Bacteria</taxon>
        <taxon>Pseudomonadati</taxon>
        <taxon>Chlamydiota</taxon>
        <taxon>Chlamydiia</taxon>
        <taxon>Chlamydiales</taxon>
        <taxon>Chlamydiaceae</taxon>
        <taxon>Chlamydia/Chlamydophila group</taxon>
        <taxon>Chlamydia</taxon>
    </lineage>
</organism>
<feature type="chain" id="PRO_0000143835" description="Uridylate kinase">
    <location>
        <begin position="1"/>
        <end position="248"/>
    </location>
</feature>
<feature type="binding site" evidence="1">
    <location>
        <begin position="11"/>
        <end position="14"/>
    </location>
    <ligand>
        <name>ATP</name>
        <dbReference type="ChEBI" id="CHEBI:30616"/>
    </ligand>
</feature>
<feature type="binding site" evidence="1">
    <location>
        <position position="53"/>
    </location>
    <ligand>
        <name>UMP</name>
        <dbReference type="ChEBI" id="CHEBI:57865"/>
    </ligand>
</feature>
<feature type="binding site" evidence="1">
    <location>
        <position position="54"/>
    </location>
    <ligand>
        <name>ATP</name>
        <dbReference type="ChEBI" id="CHEBI:30616"/>
    </ligand>
</feature>
<feature type="binding site" evidence="1">
    <location>
        <position position="58"/>
    </location>
    <ligand>
        <name>ATP</name>
        <dbReference type="ChEBI" id="CHEBI:30616"/>
    </ligand>
</feature>
<feature type="binding site" evidence="1">
    <location>
        <position position="74"/>
    </location>
    <ligand>
        <name>UMP</name>
        <dbReference type="ChEBI" id="CHEBI:57865"/>
    </ligand>
</feature>
<feature type="binding site" evidence="1">
    <location>
        <begin position="135"/>
        <end position="142"/>
    </location>
    <ligand>
        <name>UMP</name>
        <dbReference type="ChEBI" id="CHEBI:57865"/>
    </ligand>
</feature>
<feature type="binding site" evidence="1">
    <location>
        <position position="162"/>
    </location>
    <ligand>
        <name>ATP</name>
        <dbReference type="ChEBI" id="CHEBI:30616"/>
    </ligand>
</feature>
<feature type="binding site" evidence="1">
    <location>
        <position position="169"/>
    </location>
    <ligand>
        <name>ATP</name>
        <dbReference type="ChEBI" id="CHEBI:30616"/>
    </ligand>
</feature>
<feature type="binding site" evidence="1">
    <location>
        <position position="172"/>
    </location>
    <ligand>
        <name>ATP</name>
        <dbReference type="ChEBI" id="CHEBI:30616"/>
    </ligand>
</feature>
<keyword id="KW-0067">ATP-binding</keyword>
<keyword id="KW-0963">Cytoplasm</keyword>
<keyword id="KW-0418">Kinase</keyword>
<keyword id="KW-0547">Nucleotide-binding</keyword>
<keyword id="KW-0665">Pyrimidine biosynthesis</keyword>
<keyword id="KW-0808">Transferase</keyword>
<accession>Q9Z7K7</accession>
<accession>Q9JQF4</accession>
<protein>
    <recommendedName>
        <fullName evidence="1">Uridylate kinase</fullName>
        <shortName evidence="1">UK</shortName>
        <ecNumber evidence="1">2.7.4.22</ecNumber>
    </recommendedName>
    <alternativeName>
        <fullName evidence="1">Uridine monophosphate kinase</fullName>
        <shortName evidence="1">UMP kinase</shortName>
        <shortName evidence="1">UMPK</shortName>
    </alternativeName>
</protein>
<reference key="1">
    <citation type="journal article" date="1999" name="Nat. Genet.">
        <title>Comparative genomes of Chlamydia pneumoniae and C. trachomatis.</title>
        <authorList>
            <person name="Kalman S."/>
            <person name="Mitchell W.P."/>
            <person name="Marathe R."/>
            <person name="Lammel C.J."/>
            <person name="Fan J."/>
            <person name="Hyman R.W."/>
            <person name="Olinger L."/>
            <person name="Grimwood J."/>
            <person name="Davis R.W."/>
            <person name="Stephens R.S."/>
        </authorList>
    </citation>
    <scope>NUCLEOTIDE SEQUENCE [LARGE SCALE GENOMIC DNA]</scope>
    <source>
        <strain>CWL029</strain>
    </source>
</reference>
<reference key="2">
    <citation type="journal article" date="2000" name="Nucleic Acids Res.">
        <title>Genome sequences of Chlamydia trachomatis MoPn and Chlamydia pneumoniae AR39.</title>
        <authorList>
            <person name="Read T.D."/>
            <person name="Brunham R.C."/>
            <person name="Shen C."/>
            <person name="Gill S.R."/>
            <person name="Heidelberg J.F."/>
            <person name="White O."/>
            <person name="Hickey E.K."/>
            <person name="Peterson J.D."/>
            <person name="Utterback T.R."/>
            <person name="Berry K.J."/>
            <person name="Bass S."/>
            <person name="Linher K.D."/>
            <person name="Weidman J.F."/>
            <person name="Khouri H.M."/>
            <person name="Craven B."/>
            <person name="Bowman C."/>
            <person name="Dodson R.J."/>
            <person name="Gwinn M.L."/>
            <person name="Nelson W.C."/>
            <person name="DeBoy R.T."/>
            <person name="Kolonay J.F."/>
            <person name="McClarty G."/>
            <person name="Salzberg S.L."/>
            <person name="Eisen J.A."/>
            <person name="Fraser C.M."/>
        </authorList>
    </citation>
    <scope>NUCLEOTIDE SEQUENCE [LARGE SCALE GENOMIC DNA]</scope>
    <source>
        <strain>AR39</strain>
    </source>
</reference>
<reference key="3">
    <citation type="journal article" date="2000" name="Nucleic Acids Res.">
        <title>Comparison of whole genome sequences of Chlamydia pneumoniae J138 from Japan and CWL029 from USA.</title>
        <authorList>
            <person name="Shirai M."/>
            <person name="Hirakawa H."/>
            <person name="Kimoto M."/>
            <person name="Tabuchi M."/>
            <person name="Kishi F."/>
            <person name="Ouchi K."/>
            <person name="Shiba T."/>
            <person name="Ishii K."/>
            <person name="Hattori M."/>
            <person name="Kuhara S."/>
            <person name="Nakazawa T."/>
        </authorList>
    </citation>
    <scope>NUCLEOTIDE SEQUENCE [LARGE SCALE GENOMIC DNA]</scope>
    <source>
        <strain>J138</strain>
    </source>
</reference>
<reference key="4">
    <citation type="submission" date="2002-05" db="EMBL/GenBank/DDBJ databases">
        <title>The genome sequence of Chlamydia pneumoniae TW183 and comparison with other Chlamydia strains based on whole genome sequence analysis.</title>
        <authorList>
            <person name="Geng M.M."/>
            <person name="Schuhmacher A."/>
            <person name="Muehldorfer I."/>
            <person name="Bensch K.W."/>
            <person name="Schaefer K.P."/>
            <person name="Schneider S."/>
            <person name="Pohl T."/>
            <person name="Essig A."/>
            <person name="Marre R."/>
            <person name="Melchers K."/>
        </authorList>
    </citation>
    <scope>NUCLEOTIDE SEQUENCE [LARGE SCALE GENOMIC DNA]</scope>
    <source>
        <strain>TW-183</strain>
    </source>
</reference>
<evidence type="ECO:0000255" key="1">
    <source>
        <dbReference type="HAMAP-Rule" id="MF_01220"/>
    </source>
</evidence>